<proteinExistence type="inferred from homology"/>
<keyword id="KW-0067">ATP-binding</keyword>
<keyword id="KW-0175">Coiled coil</keyword>
<keyword id="KW-0963">Cytoplasm</keyword>
<keyword id="KW-0238">DNA-binding</keyword>
<keyword id="KW-0547">Nucleotide-binding</keyword>
<keyword id="KW-1185">Reference proteome</keyword>
<accession>P75361</accession>
<protein>
    <recommendedName>
        <fullName evidence="1">Chromosome partition protein Smc</fullName>
    </recommendedName>
    <alternativeName>
        <fullName>Protein P115 homolog</fullName>
    </alternativeName>
</protein>
<name>SMC_MYCPN</name>
<comment type="function">
    <text evidence="1">Required for chromosome condensation and partitioning.</text>
</comment>
<comment type="subunit">
    <text evidence="1">Homodimer.</text>
</comment>
<comment type="subcellular location">
    <subcellularLocation>
        <location evidence="1">Cytoplasm</location>
    </subcellularLocation>
</comment>
<comment type="domain">
    <text evidence="1">Contains large globular domains required for ATP hydrolysis at each terminus and a third globular domain forming a flexible SMC hinge near the middle of the molecule. These domains are separated by coiled-coil structures.</text>
</comment>
<comment type="similarity">
    <text evidence="1">Belongs to the SMC family.</text>
</comment>
<reference key="1">
    <citation type="journal article" date="1996" name="Nucleic Acids Res.">
        <title>Complete sequence analysis of the genome of the bacterium Mycoplasma pneumoniae.</title>
        <authorList>
            <person name="Himmelreich R."/>
            <person name="Hilbert H."/>
            <person name="Plagens H."/>
            <person name="Pirkl E."/>
            <person name="Li B.-C."/>
            <person name="Herrmann R."/>
        </authorList>
    </citation>
    <scope>NUCLEOTIDE SEQUENCE [LARGE SCALE GENOMIC DNA]</scope>
    <source>
        <strain>ATCC 29342 / M129 / Subtype 1</strain>
    </source>
</reference>
<organism>
    <name type="scientific">Mycoplasma pneumoniae (strain ATCC 29342 / M129 / Subtype 1)</name>
    <name type="common">Mycoplasmoides pneumoniae</name>
    <dbReference type="NCBI Taxonomy" id="272634"/>
    <lineage>
        <taxon>Bacteria</taxon>
        <taxon>Bacillati</taxon>
        <taxon>Mycoplasmatota</taxon>
        <taxon>Mycoplasmoidales</taxon>
        <taxon>Mycoplasmoidaceae</taxon>
        <taxon>Mycoplasmoides</taxon>
    </lineage>
</organism>
<sequence>MVFLKRFRAYGFKSYADEITINFTHSMTGIVGPNGSGKSNVVDALKWVLGERSMKHLRSKSGDDMIFFGSKDKPASKLAEVELTFDNSQKLLHDPRPEISVMRRIYRGSGQSEYYINGELVTLKEISGIFADIGLEKGSLGIISQGSVSWFVEAKPEERRKIFEDASGIGRYTKRKEEVTNQLARTVQNLKQVSIVLNELKKDLKKLTIQADKAQRFVKLKEELKELELSVLVADYLKSQGELDRFNHQIGYIEQDFKLHEPQLQLLEDQLNIFNQRFRDADEQSIKLQQELQAVYQTINELEQRKAVIDVQLKNELSKKDEKHKIQALKKLIRVDQAQLESLQAQVLKTTSEITLLTNELSTVQTELDTTKLNLNQNSAALVYQQAQQEFLKAQNEEWVKTNPAHVLVKNVKALTGLLNTLNTFLKFEKQYEKALLKALGKSIGYLVVNNNLAALKAIDFLLTNQIGQVTFLPIDDIAFDTKIAPEHMEILQQLDGFLGVGSDHVSCDESLQPIVNALLGQVIIASDLQAALKLSSYTYKLYRVVTLNGETVYAGGIIQGGYVKDNLSLYNLQEKLASSEANITQLEHNEKQLRTNLTSLETKLNELNKKLKYEEILLEKFNERVNHTNKAILSYKIEYEQLTNESFDGTPHSFDETRLVESLNRAWAERDELNSQLKLNQELKETLAKSIKLAEAKTADLRALLDEQRSQLVLAREGKIRFENTIHNITDKINGGYKLTMEFAIANYNKPIKLSTMQAQNKIARMQSQLDEMGPINLESIAEIADKQKRFDDINGEYESLQTAIKDLQTAIGEIDELACKEFDELIQKVNAELPKTFNYLFGGGSCQIRYTDTDNVLLSGIEVFANPPGKNVANLMLLSGGEKTLVALSVLFSILRVSAFPLVILDEAESALDPANVERFANIIGNSSNNTQFLIITHRQGTMMKCDMLLGAAMQTKGVTKTFAVSLEKAEQYISKDKQN</sequence>
<evidence type="ECO:0000255" key="1">
    <source>
        <dbReference type="HAMAP-Rule" id="MF_01894"/>
    </source>
</evidence>
<dbReference type="EMBL" id="U00089">
    <property type="protein sequence ID" value="AAB96063.1"/>
    <property type="molecule type" value="Genomic_DNA"/>
</dbReference>
<dbReference type="PIR" id="S73741">
    <property type="entry name" value="S73741"/>
</dbReference>
<dbReference type="RefSeq" id="NP_110114.1">
    <property type="nucleotide sequence ID" value="NC_000912.1"/>
</dbReference>
<dbReference type="RefSeq" id="WP_010874782.1">
    <property type="nucleotide sequence ID" value="NZ_OU342337.1"/>
</dbReference>
<dbReference type="SMR" id="P75361"/>
<dbReference type="IntAct" id="P75361">
    <property type="interactions" value="3"/>
</dbReference>
<dbReference type="STRING" id="272634.MPN_426"/>
<dbReference type="EnsemblBacteria" id="AAB96063">
    <property type="protein sequence ID" value="AAB96063"/>
    <property type="gene ID" value="MPN_426"/>
</dbReference>
<dbReference type="KEGG" id="mpn:MPN_426"/>
<dbReference type="PATRIC" id="fig|272634.6.peg.461"/>
<dbReference type="HOGENOM" id="CLU_001042_2_2_14"/>
<dbReference type="OrthoDB" id="9808768at2"/>
<dbReference type="BioCyc" id="MPNE272634:G1GJ3-689-MONOMER"/>
<dbReference type="Proteomes" id="UP000000808">
    <property type="component" value="Chromosome"/>
</dbReference>
<dbReference type="GO" id="GO:0005694">
    <property type="term" value="C:chromosome"/>
    <property type="evidence" value="ECO:0007669"/>
    <property type="project" value="InterPro"/>
</dbReference>
<dbReference type="GO" id="GO:0005737">
    <property type="term" value="C:cytoplasm"/>
    <property type="evidence" value="ECO:0007669"/>
    <property type="project" value="UniProtKB-SubCell"/>
</dbReference>
<dbReference type="GO" id="GO:0005524">
    <property type="term" value="F:ATP binding"/>
    <property type="evidence" value="ECO:0007669"/>
    <property type="project" value="UniProtKB-UniRule"/>
</dbReference>
<dbReference type="GO" id="GO:0016887">
    <property type="term" value="F:ATP hydrolysis activity"/>
    <property type="evidence" value="ECO:0007669"/>
    <property type="project" value="InterPro"/>
</dbReference>
<dbReference type="GO" id="GO:0003677">
    <property type="term" value="F:DNA binding"/>
    <property type="evidence" value="ECO:0007669"/>
    <property type="project" value="UniProtKB-UniRule"/>
</dbReference>
<dbReference type="GO" id="GO:0030261">
    <property type="term" value="P:chromosome condensation"/>
    <property type="evidence" value="ECO:0007669"/>
    <property type="project" value="InterPro"/>
</dbReference>
<dbReference type="GO" id="GO:0007059">
    <property type="term" value="P:chromosome segregation"/>
    <property type="evidence" value="ECO:0007669"/>
    <property type="project" value="UniProtKB-UniRule"/>
</dbReference>
<dbReference type="GO" id="GO:0006260">
    <property type="term" value="P:DNA replication"/>
    <property type="evidence" value="ECO:0007669"/>
    <property type="project" value="UniProtKB-UniRule"/>
</dbReference>
<dbReference type="GO" id="GO:0007062">
    <property type="term" value="P:sister chromatid cohesion"/>
    <property type="evidence" value="ECO:0007669"/>
    <property type="project" value="InterPro"/>
</dbReference>
<dbReference type="Gene3D" id="1.20.1060.20">
    <property type="match status" value="1"/>
</dbReference>
<dbReference type="Gene3D" id="3.30.70.1620">
    <property type="match status" value="1"/>
</dbReference>
<dbReference type="Gene3D" id="3.40.50.300">
    <property type="entry name" value="P-loop containing nucleotide triphosphate hydrolases"/>
    <property type="match status" value="2"/>
</dbReference>
<dbReference type="HAMAP" id="MF_01894">
    <property type="entry name" value="Smc_prok"/>
    <property type="match status" value="1"/>
</dbReference>
<dbReference type="InterPro" id="IPR027417">
    <property type="entry name" value="P-loop_NTPase"/>
</dbReference>
<dbReference type="InterPro" id="IPR003395">
    <property type="entry name" value="RecF/RecN/SMC_N"/>
</dbReference>
<dbReference type="InterPro" id="IPR024704">
    <property type="entry name" value="SMC"/>
</dbReference>
<dbReference type="InterPro" id="IPR010935">
    <property type="entry name" value="SMC_hinge"/>
</dbReference>
<dbReference type="InterPro" id="IPR036277">
    <property type="entry name" value="SMC_hinge_sf"/>
</dbReference>
<dbReference type="InterPro" id="IPR011890">
    <property type="entry name" value="SMC_prok"/>
</dbReference>
<dbReference type="PANTHER" id="PTHR43977">
    <property type="entry name" value="STRUCTURAL MAINTENANCE OF CHROMOSOMES PROTEIN 3"/>
    <property type="match status" value="1"/>
</dbReference>
<dbReference type="Pfam" id="PF06470">
    <property type="entry name" value="SMC_hinge"/>
    <property type="match status" value="1"/>
</dbReference>
<dbReference type="Pfam" id="PF02463">
    <property type="entry name" value="SMC_N"/>
    <property type="match status" value="1"/>
</dbReference>
<dbReference type="PIRSF" id="PIRSF005719">
    <property type="entry name" value="SMC"/>
    <property type="match status" value="1"/>
</dbReference>
<dbReference type="SMART" id="SM00968">
    <property type="entry name" value="SMC_hinge"/>
    <property type="match status" value="1"/>
</dbReference>
<dbReference type="SUPFAM" id="SSF52540">
    <property type="entry name" value="P-loop containing nucleoside triphosphate hydrolases"/>
    <property type="match status" value="2"/>
</dbReference>
<dbReference type="SUPFAM" id="SSF75553">
    <property type="entry name" value="Smc hinge domain"/>
    <property type="match status" value="1"/>
</dbReference>
<feature type="chain" id="PRO_0000119027" description="Chromosome partition protein Smc">
    <location>
        <begin position="1"/>
        <end position="982"/>
    </location>
</feature>
<feature type="domain" description="SMC hinge">
    <location>
        <begin position="416"/>
        <end position="535"/>
    </location>
</feature>
<feature type="coiled-coil region" evidence="1">
    <location>
        <begin position="171"/>
        <end position="235"/>
    </location>
</feature>
<feature type="coiled-coil region" evidence="1">
    <location>
        <begin position="263"/>
        <end position="377"/>
    </location>
</feature>
<feature type="coiled-coil region" evidence="1">
    <location>
        <begin position="568"/>
        <end position="627"/>
    </location>
</feature>
<feature type="coiled-coil region" evidence="1">
    <location>
        <begin position="669"/>
        <end position="713"/>
    </location>
</feature>
<feature type="coiled-coil region" evidence="1">
    <location>
        <begin position="753"/>
        <end position="818"/>
    </location>
</feature>
<feature type="binding site" evidence="1">
    <location>
        <begin position="33"/>
        <end position="40"/>
    </location>
    <ligand>
        <name>ATP</name>
        <dbReference type="ChEBI" id="CHEBI:30616"/>
    </ligand>
</feature>
<gene>
    <name evidence="1" type="primary">smc</name>
    <name type="synonym">p115</name>
    <name type="ordered locus">MPN_426</name>
    <name type="ORF">MP415</name>
</gene>